<sequence length="285" mass="31024">MKFCRFGQRGQEKPGIIDADGKIRDLSGVVPELTIEALAAAKGADVASLPLVEGEPRYGVPVKGIGKIVAIGLNYEDHAIESNLPIPTEPMMFMKALSSLNGPNDEVVLPKNSTHGDWEVELGVVIGETCRFVSEDEALSKVAGYVLVNDVSERFNQKQRGTQWSKGKGHDTFCPVGPWLVTPDEVGDPQDLDMHLNVNGTRMQTGNTKTMIFNVAQLISYVSEYITLYPGDLMITGTPPGVGEGKKPQAIYLKAGDVMELGIEKLGTQRQQVSEWRHLGDEVFG</sequence>
<accession>Q1NEI7</accession>
<dbReference type="EC" id="3.7.1.26" evidence="1 2"/>
<dbReference type="EMBL" id="AAQG01000004">
    <property type="protein sequence ID" value="EAT09363.1"/>
    <property type="molecule type" value="Genomic_DNA"/>
</dbReference>
<dbReference type="RefSeq" id="WP_009820501.1">
    <property type="nucleotide sequence ID" value="NZ_CH959306.1"/>
</dbReference>
<dbReference type="PDB" id="8GSR">
    <property type="method" value="X-ray"/>
    <property type="resolution" value="1.73 A"/>
    <property type="chains" value="A/B/C/D=2-285"/>
</dbReference>
<dbReference type="PDB" id="8GST">
    <property type="method" value="X-ray"/>
    <property type="resolution" value="1.71 A"/>
    <property type="chains" value="A/B/C/D=2-285"/>
</dbReference>
<dbReference type="PDBsum" id="8GSR"/>
<dbReference type="PDBsum" id="8GST"/>
<dbReference type="SMR" id="Q1NEI7"/>
<dbReference type="STRING" id="314266.SKA58_03585"/>
<dbReference type="KEGG" id="ag:EAT09363"/>
<dbReference type="eggNOG" id="COG0179">
    <property type="taxonomic scope" value="Bacteria"/>
</dbReference>
<dbReference type="HOGENOM" id="CLU_028458_3_4_5"/>
<dbReference type="OrthoDB" id="5197601at2"/>
<dbReference type="BioCyc" id="MetaCyc:MONOMER-16237"/>
<dbReference type="UniPathway" id="UPA00541"/>
<dbReference type="Proteomes" id="UP000005395">
    <property type="component" value="Unassembled WGS sequence"/>
</dbReference>
<dbReference type="GO" id="GO:0016787">
    <property type="term" value="F:hydrolase activity"/>
    <property type="evidence" value="ECO:0007669"/>
    <property type="project" value="UniProtKB-KW"/>
</dbReference>
<dbReference type="GO" id="GO:0046872">
    <property type="term" value="F:metal ion binding"/>
    <property type="evidence" value="ECO:0007669"/>
    <property type="project" value="UniProtKB-KW"/>
</dbReference>
<dbReference type="GO" id="GO:0019299">
    <property type="term" value="P:rhamnose metabolic process"/>
    <property type="evidence" value="ECO:0007669"/>
    <property type="project" value="UniProtKB-KW"/>
</dbReference>
<dbReference type="FunFam" id="3.90.850.10:FF:000002">
    <property type="entry name" value="2-hydroxyhepta-2,4-diene-1,7-dioate isomerase"/>
    <property type="match status" value="1"/>
</dbReference>
<dbReference type="Gene3D" id="3.90.850.10">
    <property type="entry name" value="Fumarylacetoacetase-like, C-terminal domain"/>
    <property type="match status" value="1"/>
</dbReference>
<dbReference type="InterPro" id="IPR051121">
    <property type="entry name" value="FAH"/>
</dbReference>
<dbReference type="InterPro" id="IPR011234">
    <property type="entry name" value="Fumarylacetoacetase-like_C"/>
</dbReference>
<dbReference type="InterPro" id="IPR036663">
    <property type="entry name" value="Fumarylacetoacetase_C_sf"/>
</dbReference>
<dbReference type="PANTHER" id="PTHR42796:SF4">
    <property type="entry name" value="FUMARYLACETOACETATE HYDROLASE DOMAIN-CONTAINING PROTEIN 2A"/>
    <property type="match status" value="1"/>
</dbReference>
<dbReference type="PANTHER" id="PTHR42796">
    <property type="entry name" value="FUMARYLACETOACETATE HYDROLASE DOMAIN-CONTAINING PROTEIN 2A-RELATED"/>
    <property type="match status" value="1"/>
</dbReference>
<dbReference type="Pfam" id="PF01557">
    <property type="entry name" value="FAA_hydrolase"/>
    <property type="match status" value="1"/>
</dbReference>
<dbReference type="SUPFAM" id="SSF56529">
    <property type="entry name" value="FAH"/>
    <property type="match status" value="1"/>
</dbReference>
<comment type="function">
    <text evidence="1 2">Hydrolase that catalyzes the hydrolysis of 2,4-didehydro-3-deoxy-L-rhamnonate to pyruvate and L-lactate (PubMed:19187228, PubMed:36563174). Can also hydrolyze L-2,4-diketo-3-deoxylyxonate and L-2,4-diketo-3-deoxymannonate (PubMed:19187228). In vitro can also use acylpyruvates such as acetylpyruvate and trimethylacetopyruvate (PubMed:36563174). Catalyzes the fifth (last) step in an alternative pathway for rhamnose utilization that does not involve phosphorylated intermediates (PubMed:19187228).</text>
</comment>
<comment type="catalytic activity">
    <reaction evidence="1 2">
        <text>2,4-didehydro-3-deoxy-L-rhamnonate + H2O = (S)-lactate + pyruvate + H(+)</text>
        <dbReference type="Rhea" id="RHEA:62376"/>
        <dbReference type="ChEBI" id="CHEBI:15361"/>
        <dbReference type="ChEBI" id="CHEBI:15377"/>
        <dbReference type="ChEBI" id="CHEBI:15378"/>
        <dbReference type="ChEBI" id="CHEBI:16651"/>
        <dbReference type="ChEBI" id="CHEBI:131847"/>
        <dbReference type="EC" id="3.7.1.26"/>
    </reaction>
    <physiologicalReaction direction="left-to-right" evidence="1">
        <dbReference type="Rhea" id="RHEA:62377"/>
    </physiologicalReaction>
</comment>
<comment type="cofactor">
    <cofactor evidence="6">
        <name>Mg(2+)</name>
        <dbReference type="ChEBI" id="CHEBI:18420"/>
    </cofactor>
    <text evidence="2">Binds 1 Mg(2+) ion per subunit.</text>
</comment>
<comment type="biophysicochemical properties">
    <kinetics>
        <KM evidence="2">0.0317 mM for acetylpyruvate</KM>
        <KM evidence="2">0.0472 mM for trimethylacetopyruvate</KM>
        <text evidence="2">kcat is 14.2 min(-1) with acetylpyruvate as substrate. kcat is 34.8 min(-1) with trimethylacetopyruvate as substrate.</text>
    </kinetics>
</comment>
<comment type="pathway">
    <text evidence="5">Carbohydrate degradation; L-rhamnose degradation.</text>
</comment>
<comment type="subunit">
    <text evidence="2">Homodimer.</text>
</comment>
<comment type="similarity">
    <text evidence="4">Belongs to the FAH family.</text>
</comment>
<organism>
    <name type="scientific">Sphingomonas sp. (strain SKA58)</name>
    <dbReference type="NCBI Taxonomy" id="314266"/>
    <lineage>
        <taxon>Bacteria</taxon>
        <taxon>Pseudomonadati</taxon>
        <taxon>Pseudomonadota</taxon>
        <taxon>Alphaproteobacteria</taxon>
        <taxon>Sphingomonadales</taxon>
        <taxon>Sphingomonadaceae</taxon>
        <taxon>Sphingomonas</taxon>
    </lineage>
</organism>
<feature type="chain" id="PRO_0000461194" description="2,4-didehydro-3-deoxy-L-rhamnonate hydrolase">
    <location>
        <begin position="1"/>
        <end position="285"/>
    </location>
</feature>
<feature type="binding site" evidence="2 9">
    <location>
        <position position="73"/>
    </location>
    <ligand>
        <name>pyruvate</name>
        <dbReference type="ChEBI" id="CHEBI:15361"/>
    </ligand>
</feature>
<feature type="binding site" evidence="2 8 9">
    <location>
        <position position="119"/>
    </location>
    <ligand>
        <name>Mg(2+)</name>
        <dbReference type="ChEBI" id="CHEBI:18420"/>
    </ligand>
</feature>
<feature type="binding site" evidence="2 8 9">
    <location>
        <position position="121"/>
    </location>
    <ligand>
        <name>Mg(2+)</name>
        <dbReference type="ChEBI" id="CHEBI:18420"/>
    </ligand>
</feature>
<feature type="binding site" evidence="2 8 9">
    <location>
        <position position="150"/>
    </location>
    <ligand>
        <name>Mg(2+)</name>
        <dbReference type="ChEBI" id="CHEBI:18420"/>
    </ligand>
</feature>
<feature type="binding site" evidence="2 9">
    <location>
        <position position="168"/>
    </location>
    <ligand>
        <name>pyruvate</name>
        <dbReference type="ChEBI" id="CHEBI:15361"/>
    </ligand>
</feature>
<feature type="binding site" evidence="2 9">
    <location>
        <position position="238"/>
    </location>
    <ligand>
        <name>pyruvate</name>
        <dbReference type="ChEBI" id="CHEBI:15361"/>
    </ligand>
</feature>
<feature type="mutagenesis site" description="Decrease in hydrolase activity." evidence="2">
    <original>L</original>
    <variation>A</variation>
    <location>
        <position position="73"/>
    </location>
</feature>
<feature type="mutagenesis site" description="Loss of hydrolase activity." evidence="2">
    <original>H</original>
    <variation>A</variation>
    <location>
        <position position="78"/>
    </location>
</feature>
<feature type="mutagenesis site" description="Strong decrease in hydrolase activity." evidence="2">
    <original>E</original>
    <variation>A</variation>
    <location>
        <position position="81"/>
    </location>
</feature>
<feature type="mutagenesis site" description="No change in hydrolase activity." evidence="2">
    <original>S</original>
    <variation>A</variation>
    <location>
        <position position="82"/>
    </location>
</feature>
<feature type="mutagenesis site" description="No change in hydrolase activity." evidence="2">
    <original>M</original>
    <variation>A</variation>
    <location>
        <position position="91"/>
    </location>
</feature>
<feature type="mutagenesis site" description="Loss of hydrolase activity." evidence="2">
    <original>E</original>
    <variation>A</variation>
    <location>
        <position position="119"/>
    </location>
</feature>
<feature type="mutagenesis site" description="Loss of hydrolase activity." evidence="2">
    <original>E</original>
    <variation>A</variation>
    <location>
        <position position="121"/>
    </location>
</feature>
<feature type="mutagenesis site" description="Loss of hydrolase activity." evidence="2">
    <original>D</original>
    <variation>A</variation>
    <location>
        <position position="150"/>
    </location>
</feature>
<feature type="mutagenesis site" description="No change in hydrolase activity." evidence="2">
    <original>R</original>
    <variation>A</variation>
    <location>
        <position position="154"/>
    </location>
</feature>
<feature type="mutagenesis site" description="Small decrease in hydrolase activity." evidence="2">
    <original>Q</original>
    <variation>A</variation>
    <location>
        <position position="157"/>
    </location>
</feature>
<feature type="mutagenesis site" description="Loss of hydrolase activity." evidence="2">
    <original>K</original>
    <variation>A</variation>
    <location>
        <position position="158"/>
    </location>
</feature>
<feature type="strand" evidence="10">
    <location>
        <begin position="2"/>
        <end position="8"/>
    </location>
</feature>
<feature type="strand" evidence="10">
    <location>
        <begin position="13"/>
        <end position="17"/>
    </location>
</feature>
<feature type="strand" evidence="10">
    <location>
        <begin position="23"/>
        <end position="25"/>
    </location>
</feature>
<feature type="turn" evidence="10">
    <location>
        <begin position="27"/>
        <end position="29"/>
    </location>
</feature>
<feature type="helix" evidence="10">
    <location>
        <begin position="38"/>
        <end position="42"/>
    </location>
</feature>
<feature type="helix" evidence="10">
    <location>
        <begin position="46"/>
        <end position="48"/>
    </location>
</feature>
<feature type="strand" evidence="10">
    <location>
        <begin position="61"/>
        <end position="63"/>
    </location>
</feature>
<feature type="strand" evidence="10">
    <location>
        <begin position="68"/>
        <end position="71"/>
    </location>
</feature>
<feature type="helix" evidence="10">
    <location>
        <begin position="76"/>
        <end position="82"/>
    </location>
</feature>
<feature type="strand" evidence="10">
    <location>
        <begin position="92"/>
        <end position="94"/>
    </location>
</feature>
<feature type="helix" evidence="10">
    <location>
        <begin position="97"/>
        <end position="99"/>
    </location>
</feature>
<feature type="strand" evidence="10">
    <location>
        <begin position="120"/>
        <end position="126"/>
    </location>
</feature>
<feature type="strand" evidence="10">
    <location>
        <begin position="130"/>
        <end position="132"/>
    </location>
</feature>
<feature type="helix" evidence="10">
    <location>
        <begin position="135"/>
        <end position="138"/>
    </location>
</feature>
<feature type="helix" evidence="10">
    <location>
        <begin position="139"/>
        <end position="141"/>
    </location>
</feature>
<feature type="strand" evidence="10">
    <location>
        <begin position="142"/>
        <end position="149"/>
    </location>
</feature>
<feature type="helix" evidence="10">
    <location>
        <begin position="154"/>
        <end position="158"/>
    </location>
</feature>
<feature type="helix" evidence="10">
    <location>
        <begin position="164"/>
        <end position="167"/>
    </location>
</feature>
<feature type="strand" evidence="10">
    <location>
        <begin position="174"/>
        <end position="176"/>
    </location>
</feature>
<feature type="helix" evidence="10">
    <location>
        <begin position="183"/>
        <end position="186"/>
    </location>
</feature>
<feature type="strand" evidence="10">
    <location>
        <begin position="193"/>
        <end position="198"/>
    </location>
</feature>
<feature type="strand" evidence="10">
    <location>
        <begin position="201"/>
        <end position="207"/>
    </location>
</feature>
<feature type="helix" evidence="10">
    <location>
        <begin position="208"/>
        <end position="210"/>
    </location>
</feature>
<feature type="strand" evidence="10">
    <location>
        <begin position="211"/>
        <end position="213"/>
    </location>
</feature>
<feature type="helix" evidence="10">
    <location>
        <begin position="215"/>
        <end position="222"/>
    </location>
</feature>
<feature type="turn" evidence="10">
    <location>
        <begin position="223"/>
        <end position="225"/>
    </location>
</feature>
<feature type="strand" evidence="10">
    <location>
        <begin position="233"/>
        <end position="235"/>
    </location>
</feature>
<feature type="helix" evidence="10">
    <location>
        <begin position="243"/>
        <end position="245"/>
    </location>
</feature>
<feature type="strand" evidence="10">
    <location>
        <begin position="247"/>
        <end position="249"/>
    </location>
</feature>
<feature type="strand" evidence="10">
    <location>
        <begin position="258"/>
        <end position="263"/>
    </location>
</feature>
<feature type="strand" evidence="10">
    <location>
        <begin position="268"/>
        <end position="274"/>
    </location>
</feature>
<evidence type="ECO:0000269" key="1">
    <source>
    </source>
</evidence>
<evidence type="ECO:0000269" key="2">
    <source>
    </source>
</evidence>
<evidence type="ECO:0000303" key="3">
    <source>
    </source>
</evidence>
<evidence type="ECO:0000305" key="4"/>
<evidence type="ECO:0000305" key="5">
    <source>
    </source>
</evidence>
<evidence type="ECO:0000305" key="6">
    <source>
    </source>
</evidence>
<evidence type="ECO:0000312" key="7">
    <source>
        <dbReference type="EMBL" id="EAT09363.1"/>
    </source>
</evidence>
<evidence type="ECO:0007744" key="8">
    <source>
        <dbReference type="PDB" id="8GSR"/>
    </source>
</evidence>
<evidence type="ECO:0007744" key="9">
    <source>
        <dbReference type="PDB" id="8GST"/>
    </source>
</evidence>
<evidence type="ECO:0007829" key="10">
    <source>
        <dbReference type="PDB" id="8GST"/>
    </source>
</evidence>
<keyword id="KW-0002">3D-structure</keyword>
<keyword id="KW-0378">Hydrolase</keyword>
<keyword id="KW-0460">Magnesium</keyword>
<keyword id="KW-0479">Metal-binding</keyword>
<keyword id="KW-1185">Reference proteome</keyword>
<keyword id="KW-0684">Rhamnose metabolism</keyword>
<reference key="1">
    <citation type="submission" date="2006-03" db="EMBL/GenBank/DDBJ databases">
        <authorList>
            <person name="Hagstrom A."/>
            <person name="Ferriera S."/>
            <person name="Johnson J."/>
            <person name="Kravitz S."/>
            <person name="Halpern A."/>
            <person name="Remington K."/>
            <person name="Beeson K."/>
            <person name="Tran B."/>
            <person name="Rogers Y.-H."/>
            <person name="Friedman R."/>
            <person name="Venter J.C."/>
        </authorList>
    </citation>
    <scope>NUCLEOTIDE SEQUENCE [LARGE SCALE GENOMIC DNA]</scope>
    <source>
        <strain>SKA58</strain>
    </source>
</reference>
<reference key="2">
    <citation type="journal article" date="2009" name="FEBS J.">
        <title>Novel modified version of nonphosphorylated sugar metabolism--an alternative L-rhamnose pathway of Sphingomonas sp.</title>
        <authorList>
            <person name="Watanabe S."/>
            <person name="Makino K."/>
        </authorList>
    </citation>
    <scope>FUNCTION</scope>
    <scope>CATALYTIC ACTIVITY</scope>
    <scope>PATHWAY</scope>
    <source>
        <strain>NBRC 101715</strain>
    </source>
</reference>
<reference evidence="8 9" key="3">
    <citation type="journal article" date="2023" name="Biochemistry">
        <title>Crystal Structure of l-2,4-Diketo-3-deoxyrhamnonate Hydrolase Involved in the Nonphosphorylated l-Rhamnose Pathway from Bacteria.</title>
        <authorList>
            <person name="Fukuhara S."/>
            <person name="Watanabe S."/>
            <person name="Watanabe Y."/>
            <person name="Nishiwaki H."/>
        </authorList>
    </citation>
    <scope>X-RAY CRYSTALLOGRAPHY (1.71 ANGSTROMS) OF 2-285 IN COMPLEX WITH MG(2+) AND PYRUVATE</scope>
    <scope>FUNCTION</scope>
    <scope>CATALYTIC ACTIVITY</scope>
    <scope>COFACTOR</scope>
    <scope>BIOPHYSICOCHEMICAL PROPERTIES</scope>
    <scope>SUBUNIT</scope>
    <scope>MUTAGENESIS OF LEU-73; HIS-78; GLU-81; SER-82; MET-91; GLU-119; GLU-121; ASP-150; ARG-154; GLN-157 AND LYS-158</scope>
    <source>
        <strain>SKA58</strain>
    </source>
</reference>
<name>DKDRH_SPHSS</name>
<gene>
    <name evidence="3" type="primary">LRA6</name>
    <name evidence="7" type="ORF">SKA58_03585</name>
</gene>
<protein>
    <recommendedName>
        <fullName evidence="4">2,4-didehydro-3-deoxy-L-rhamnonate hydrolase</fullName>
        <ecNumber evidence="1 2">3.7.1.26</ecNumber>
    </recommendedName>
    <alternativeName>
        <fullName evidence="3">L-2,4-diketo-3-deoxyrhamnonate hydrolase</fullName>
        <shortName evidence="3">L-DKDR hydrolase</shortName>
    </alternativeName>
    <alternativeName>
        <fullName evidence="3">SpLRA6</fullName>
    </alternativeName>
</protein>
<proteinExistence type="evidence at protein level"/>